<proteinExistence type="uncertain"/>
<gene>
    <name type="primary">APUM20</name>
    <name type="ordered locus">At1g21620</name>
    <name type="ORF">F24J8.22</name>
    <name type="ORF">F8K7.3</name>
</gene>
<keyword id="KW-0963">Cytoplasm</keyword>
<keyword id="KW-1185">Reference proteome</keyword>
<keyword id="KW-0677">Repeat</keyword>
<keyword id="KW-0694">RNA-binding</keyword>
<keyword id="KW-0810">Translation regulation</keyword>
<feature type="chain" id="PRO_0000401402" description="Putative pumilio homolog 20">
    <location>
        <begin position="1"/>
        <end position="332"/>
    </location>
</feature>
<feature type="domain" description="PUM-HD" evidence="2">
    <location>
        <begin position="1"/>
        <end position="332"/>
    </location>
</feature>
<feature type="repeat" description="Pumilio 1">
    <location>
        <begin position="89"/>
        <end position="124"/>
    </location>
</feature>
<feature type="repeat" description="Pumilio 2">
    <location>
        <begin position="125"/>
        <end position="159"/>
    </location>
</feature>
<feature type="repeat" description="Pumilio 3; degenerate">
    <location>
        <begin position="160"/>
        <end position="191"/>
    </location>
</feature>
<feature type="repeat" description="Pumilio 4">
    <location>
        <begin position="192"/>
        <end position="228"/>
    </location>
</feature>
<feature type="repeat" description="Pumilio 5">
    <location>
        <begin position="229"/>
        <end position="266"/>
    </location>
</feature>
<feature type="repeat" description="Pumilio 6">
    <location>
        <begin position="267"/>
        <end position="303"/>
    </location>
</feature>
<comment type="function">
    <text evidence="1">Sequence-specific RNA-binding protein that regulates translation and mRNA stability by binding the 3'-UTR of target mRNAs.</text>
</comment>
<comment type="subcellular location">
    <subcellularLocation>
        <location evidence="3">Cytoplasm</location>
    </subcellularLocation>
</comment>
<comment type="domain">
    <text evidence="1">The pumilio repeats mediate the association with RNA by packing together to form a right-handed superhelix that approximates a half donut. The number as well as the specific sequence of the repeats determine the specificity for target mRNAs (By similarity).</text>
</comment>
<comment type="caution">
    <text evidence="3">Could be the product of a pseudogene.</text>
</comment>
<comment type="sequence caution" evidence="3">
    <conflict type="erroneous gene model prediction">
        <sequence resource="EMBL-CDS" id="AAD41414"/>
    </conflict>
</comment>
<comment type="sequence caution" evidence="3">
    <conflict type="frameshift">
        <sequence resource="EMBL-CDS" id="AAD41414"/>
    </conflict>
</comment>
<comment type="sequence caution" evidence="3">
    <conflict type="frameshift">
        <sequence resource="EMBL" id="AC015447"/>
    </conflict>
</comment>
<comment type="sequence caution" evidence="3">
    <conflict type="erroneous gene model prediction">
        <sequence resource="EMBL-CDS" id="AEE30127"/>
    </conflict>
</comment>
<accession>Q9XI17</accession>
<accession>F4HY31</accession>
<reference key="1">
    <citation type="journal article" date="2000" name="Nature">
        <title>Sequence and analysis of chromosome 1 of the plant Arabidopsis thaliana.</title>
        <authorList>
            <person name="Theologis A."/>
            <person name="Ecker J.R."/>
            <person name="Palm C.J."/>
            <person name="Federspiel N.A."/>
            <person name="Kaul S."/>
            <person name="White O."/>
            <person name="Alonso J."/>
            <person name="Altafi H."/>
            <person name="Araujo R."/>
            <person name="Bowman C.L."/>
            <person name="Brooks S.Y."/>
            <person name="Buehler E."/>
            <person name="Chan A."/>
            <person name="Chao Q."/>
            <person name="Chen H."/>
            <person name="Cheuk R.F."/>
            <person name="Chin C.W."/>
            <person name="Chung M.K."/>
            <person name="Conn L."/>
            <person name="Conway A.B."/>
            <person name="Conway A.R."/>
            <person name="Creasy T.H."/>
            <person name="Dewar K."/>
            <person name="Dunn P."/>
            <person name="Etgu P."/>
            <person name="Feldblyum T.V."/>
            <person name="Feng J.-D."/>
            <person name="Fong B."/>
            <person name="Fujii C.Y."/>
            <person name="Gill J.E."/>
            <person name="Goldsmith A.D."/>
            <person name="Haas B."/>
            <person name="Hansen N.F."/>
            <person name="Hughes B."/>
            <person name="Huizar L."/>
            <person name="Hunter J.L."/>
            <person name="Jenkins J."/>
            <person name="Johnson-Hopson C."/>
            <person name="Khan S."/>
            <person name="Khaykin E."/>
            <person name="Kim C.J."/>
            <person name="Koo H.L."/>
            <person name="Kremenetskaia I."/>
            <person name="Kurtz D.B."/>
            <person name="Kwan A."/>
            <person name="Lam B."/>
            <person name="Langin-Hooper S."/>
            <person name="Lee A."/>
            <person name="Lee J.M."/>
            <person name="Lenz C.A."/>
            <person name="Li J.H."/>
            <person name="Li Y.-P."/>
            <person name="Lin X."/>
            <person name="Liu S.X."/>
            <person name="Liu Z.A."/>
            <person name="Luros J.S."/>
            <person name="Maiti R."/>
            <person name="Marziali A."/>
            <person name="Militscher J."/>
            <person name="Miranda M."/>
            <person name="Nguyen M."/>
            <person name="Nierman W.C."/>
            <person name="Osborne B.I."/>
            <person name="Pai G."/>
            <person name="Peterson J."/>
            <person name="Pham P.K."/>
            <person name="Rizzo M."/>
            <person name="Rooney T."/>
            <person name="Rowley D."/>
            <person name="Sakano H."/>
            <person name="Salzberg S.L."/>
            <person name="Schwartz J.R."/>
            <person name="Shinn P."/>
            <person name="Southwick A.M."/>
            <person name="Sun H."/>
            <person name="Tallon L.J."/>
            <person name="Tambunga G."/>
            <person name="Toriumi M.J."/>
            <person name="Town C.D."/>
            <person name="Utterback T."/>
            <person name="Van Aken S."/>
            <person name="Vaysberg M."/>
            <person name="Vysotskaia V.S."/>
            <person name="Walker M."/>
            <person name="Wu D."/>
            <person name="Yu G."/>
            <person name="Fraser C.M."/>
            <person name="Venter J.C."/>
            <person name="Davis R.W."/>
        </authorList>
    </citation>
    <scope>NUCLEOTIDE SEQUENCE [LARGE SCALE GENOMIC DNA]</scope>
    <source>
        <strain>cv. Columbia</strain>
    </source>
</reference>
<reference key="2">
    <citation type="journal article" date="2017" name="Plant J.">
        <title>Araport11: a complete reannotation of the Arabidopsis thaliana reference genome.</title>
        <authorList>
            <person name="Cheng C.Y."/>
            <person name="Krishnakumar V."/>
            <person name="Chan A.P."/>
            <person name="Thibaud-Nissen F."/>
            <person name="Schobel S."/>
            <person name="Town C.D."/>
        </authorList>
    </citation>
    <scope>GENOME REANNOTATION</scope>
    <source>
        <strain>cv. Columbia</strain>
    </source>
</reference>
<reference key="3">
    <citation type="journal article" date="2009" name="FEBS J.">
        <title>Molecular characterization of Arabidopsis thaliana PUF proteins -- binding specificity and target candidates.</title>
        <authorList>
            <person name="Francischini C.W."/>
            <person name="Quaggio R.B."/>
        </authorList>
    </citation>
    <scope>GENE FAMILY</scope>
</reference>
<reference key="4">
    <citation type="journal article" date="2010" name="BMC Plant Biol.">
        <title>The Puf family of RNA-binding proteins in plants: phylogeny, structural modeling, activity and subcellular localization.</title>
        <authorList>
            <person name="Tam P.P."/>
            <person name="Barrette-Ng I.H."/>
            <person name="Simon D.M."/>
            <person name="Tam M.W."/>
            <person name="Ang A.L."/>
            <person name="Muench D.G."/>
        </authorList>
    </citation>
    <scope>GENE FAMILY</scope>
</reference>
<protein>
    <recommendedName>
        <fullName>Putative pumilio homolog 20</fullName>
        <shortName>APUM-20</shortName>
        <shortName>AtPUM20</shortName>
    </recommendedName>
</protein>
<sequence>MAHQLRFAAAREPISEEYPAVALPHPRCISVAFPPPRFTPSPSPLTNYSFLAALTPQELEMRLQIAMDVQMISKLDQRKLQTMASLLTSDPDYFLMIARNMNGSKRIQKLLGKTDDVDALFAAAILRRFLHIITDKYASYVVRRGMTVFDKKKKKAMYEHILHYASHIARDKHGNLALNDIITDAYRNKLFDVIAHKALVLSNDAYGNFVIQRVLKLNDLRSKNNIVVSLRGHFVDLSFQKYGSYVVDVLLETKESMVVVVEELMECEGDMLMRLARNEYGNFLVCKALRVTQKEMVRTDLFWGLVHKLKPFHNLLRWSRGKNIASILNSIR</sequence>
<evidence type="ECO:0000250" key="1"/>
<evidence type="ECO:0000255" key="2">
    <source>
        <dbReference type="PROSITE-ProRule" id="PRU00318"/>
    </source>
</evidence>
<evidence type="ECO:0000305" key="3"/>
<dbReference type="EMBL" id="AC007727">
    <property type="protein sequence ID" value="AAD41414.1"/>
    <property type="status" value="ALT_SEQ"/>
    <property type="molecule type" value="Genomic_DNA"/>
</dbReference>
<dbReference type="EMBL" id="AC015447">
    <property type="status" value="NOT_ANNOTATED_CDS"/>
    <property type="molecule type" value="Genomic_DNA"/>
</dbReference>
<dbReference type="EMBL" id="CP002684">
    <property type="protein sequence ID" value="AEE30127.1"/>
    <property type="status" value="ALT_SEQ"/>
    <property type="molecule type" value="Genomic_DNA"/>
</dbReference>
<dbReference type="PIR" id="B86349">
    <property type="entry name" value="B86349"/>
</dbReference>
<dbReference type="RefSeq" id="NP_173581.1">
    <property type="nucleotide sequence ID" value="NM_102011.1"/>
</dbReference>
<dbReference type="SMR" id="Q9XI17"/>
<dbReference type="PaxDb" id="3702-AT1G21620.1"/>
<dbReference type="GeneID" id="838764"/>
<dbReference type="KEGG" id="ath:AT1G21620"/>
<dbReference type="Araport" id="AT1G21620"/>
<dbReference type="TAIR" id="AT1G21620">
    <property type="gene designation" value="PUM20"/>
</dbReference>
<dbReference type="eggNOG" id="KOG2049">
    <property type="taxonomic scope" value="Eukaryota"/>
</dbReference>
<dbReference type="HOGENOM" id="CLU_048501_0_0_1"/>
<dbReference type="InParanoid" id="Q9XI17"/>
<dbReference type="OrthoDB" id="668540at2759"/>
<dbReference type="PhylomeDB" id="Q9XI17"/>
<dbReference type="Proteomes" id="UP000006548">
    <property type="component" value="Chromosome 1"/>
</dbReference>
<dbReference type="ExpressionAtlas" id="Q9XI17">
    <property type="expression patterns" value="baseline and differential"/>
</dbReference>
<dbReference type="GO" id="GO:0005737">
    <property type="term" value="C:cytoplasm"/>
    <property type="evidence" value="ECO:0000318"/>
    <property type="project" value="GO_Central"/>
</dbReference>
<dbReference type="GO" id="GO:0003729">
    <property type="term" value="F:mRNA binding"/>
    <property type="evidence" value="ECO:0000318"/>
    <property type="project" value="GO_Central"/>
</dbReference>
<dbReference type="GO" id="GO:0010608">
    <property type="term" value="P:post-transcriptional regulation of gene expression"/>
    <property type="evidence" value="ECO:0000318"/>
    <property type="project" value="GO_Central"/>
</dbReference>
<dbReference type="GO" id="GO:0006417">
    <property type="term" value="P:regulation of translation"/>
    <property type="evidence" value="ECO:0007669"/>
    <property type="project" value="UniProtKB-KW"/>
</dbReference>
<dbReference type="Gene3D" id="1.25.10.10">
    <property type="entry name" value="Leucine-rich Repeat Variant"/>
    <property type="match status" value="1"/>
</dbReference>
<dbReference type="InterPro" id="IPR011989">
    <property type="entry name" value="ARM-like"/>
</dbReference>
<dbReference type="InterPro" id="IPR016024">
    <property type="entry name" value="ARM-type_fold"/>
</dbReference>
<dbReference type="InterPro" id="IPR033133">
    <property type="entry name" value="PUM-HD"/>
</dbReference>
<dbReference type="InterPro" id="IPR001313">
    <property type="entry name" value="Pumilio_RNA-bd_rpt"/>
</dbReference>
<dbReference type="PANTHER" id="PTHR12537:SF166">
    <property type="entry name" value="PUMILIO HOMOLOG 18-RELATED"/>
    <property type="match status" value="1"/>
</dbReference>
<dbReference type="PANTHER" id="PTHR12537">
    <property type="entry name" value="RNA BINDING PROTEIN PUMILIO-RELATED"/>
    <property type="match status" value="1"/>
</dbReference>
<dbReference type="Pfam" id="PF00806">
    <property type="entry name" value="PUF"/>
    <property type="match status" value="3"/>
</dbReference>
<dbReference type="SMART" id="SM00025">
    <property type="entry name" value="Pumilio"/>
    <property type="match status" value="4"/>
</dbReference>
<dbReference type="SUPFAM" id="SSF48371">
    <property type="entry name" value="ARM repeat"/>
    <property type="match status" value="1"/>
</dbReference>
<dbReference type="PROSITE" id="PS50302">
    <property type="entry name" value="PUM"/>
    <property type="match status" value="5"/>
</dbReference>
<dbReference type="PROSITE" id="PS50303">
    <property type="entry name" value="PUM_HD"/>
    <property type="match status" value="1"/>
</dbReference>
<name>PUM20_ARATH</name>
<organism>
    <name type="scientific">Arabidopsis thaliana</name>
    <name type="common">Mouse-ear cress</name>
    <dbReference type="NCBI Taxonomy" id="3702"/>
    <lineage>
        <taxon>Eukaryota</taxon>
        <taxon>Viridiplantae</taxon>
        <taxon>Streptophyta</taxon>
        <taxon>Embryophyta</taxon>
        <taxon>Tracheophyta</taxon>
        <taxon>Spermatophyta</taxon>
        <taxon>Magnoliopsida</taxon>
        <taxon>eudicotyledons</taxon>
        <taxon>Gunneridae</taxon>
        <taxon>Pentapetalae</taxon>
        <taxon>rosids</taxon>
        <taxon>malvids</taxon>
        <taxon>Brassicales</taxon>
        <taxon>Brassicaceae</taxon>
        <taxon>Camelineae</taxon>
        <taxon>Arabidopsis</taxon>
    </lineage>
</organism>